<dbReference type="EC" id="6.3.4.2" evidence="1"/>
<dbReference type="EMBL" id="CP000733">
    <property type="protein sequence ID" value="ABS77310.1"/>
    <property type="molecule type" value="Genomic_DNA"/>
</dbReference>
<dbReference type="RefSeq" id="WP_011996518.1">
    <property type="nucleotide sequence ID" value="NC_009727.1"/>
</dbReference>
<dbReference type="SMR" id="A9KDH0"/>
<dbReference type="MEROPS" id="C26.964"/>
<dbReference type="KEGG" id="cbd:CBUD_0320"/>
<dbReference type="HOGENOM" id="CLU_011675_5_0_6"/>
<dbReference type="UniPathway" id="UPA00159">
    <property type="reaction ID" value="UER00277"/>
</dbReference>
<dbReference type="Proteomes" id="UP000008555">
    <property type="component" value="Chromosome"/>
</dbReference>
<dbReference type="GO" id="GO:0005829">
    <property type="term" value="C:cytosol"/>
    <property type="evidence" value="ECO:0007669"/>
    <property type="project" value="TreeGrafter"/>
</dbReference>
<dbReference type="GO" id="GO:0005524">
    <property type="term" value="F:ATP binding"/>
    <property type="evidence" value="ECO:0007669"/>
    <property type="project" value="UniProtKB-KW"/>
</dbReference>
<dbReference type="GO" id="GO:0003883">
    <property type="term" value="F:CTP synthase activity"/>
    <property type="evidence" value="ECO:0007669"/>
    <property type="project" value="UniProtKB-UniRule"/>
</dbReference>
<dbReference type="GO" id="GO:0004359">
    <property type="term" value="F:glutaminase activity"/>
    <property type="evidence" value="ECO:0007669"/>
    <property type="project" value="RHEA"/>
</dbReference>
<dbReference type="GO" id="GO:0042802">
    <property type="term" value="F:identical protein binding"/>
    <property type="evidence" value="ECO:0007669"/>
    <property type="project" value="TreeGrafter"/>
</dbReference>
<dbReference type="GO" id="GO:0046872">
    <property type="term" value="F:metal ion binding"/>
    <property type="evidence" value="ECO:0007669"/>
    <property type="project" value="UniProtKB-KW"/>
</dbReference>
<dbReference type="GO" id="GO:0044210">
    <property type="term" value="P:'de novo' CTP biosynthetic process"/>
    <property type="evidence" value="ECO:0007669"/>
    <property type="project" value="UniProtKB-UniRule"/>
</dbReference>
<dbReference type="GO" id="GO:0019856">
    <property type="term" value="P:pyrimidine nucleobase biosynthetic process"/>
    <property type="evidence" value="ECO:0007669"/>
    <property type="project" value="TreeGrafter"/>
</dbReference>
<dbReference type="CDD" id="cd03113">
    <property type="entry name" value="CTPS_N"/>
    <property type="match status" value="1"/>
</dbReference>
<dbReference type="CDD" id="cd01746">
    <property type="entry name" value="GATase1_CTP_Synthase"/>
    <property type="match status" value="1"/>
</dbReference>
<dbReference type="FunFam" id="3.40.50.300:FF:000009">
    <property type="entry name" value="CTP synthase"/>
    <property type="match status" value="1"/>
</dbReference>
<dbReference type="FunFam" id="3.40.50.880:FF:000002">
    <property type="entry name" value="CTP synthase"/>
    <property type="match status" value="1"/>
</dbReference>
<dbReference type="Gene3D" id="3.40.50.880">
    <property type="match status" value="1"/>
</dbReference>
<dbReference type="Gene3D" id="3.40.50.300">
    <property type="entry name" value="P-loop containing nucleotide triphosphate hydrolases"/>
    <property type="match status" value="1"/>
</dbReference>
<dbReference type="HAMAP" id="MF_01227">
    <property type="entry name" value="PyrG"/>
    <property type="match status" value="1"/>
</dbReference>
<dbReference type="InterPro" id="IPR029062">
    <property type="entry name" value="Class_I_gatase-like"/>
</dbReference>
<dbReference type="InterPro" id="IPR004468">
    <property type="entry name" value="CTP_synthase"/>
</dbReference>
<dbReference type="InterPro" id="IPR017456">
    <property type="entry name" value="CTP_synthase_N"/>
</dbReference>
<dbReference type="InterPro" id="IPR017926">
    <property type="entry name" value="GATASE"/>
</dbReference>
<dbReference type="InterPro" id="IPR033828">
    <property type="entry name" value="GATase1_CTP_Synthase"/>
</dbReference>
<dbReference type="InterPro" id="IPR027417">
    <property type="entry name" value="P-loop_NTPase"/>
</dbReference>
<dbReference type="NCBIfam" id="NF003792">
    <property type="entry name" value="PRK05380.1"/>
    <property type="match status" value="1"/>
</dbReference>
<dbReference type="NCBIfam" id="TIGR00337">
    <property type="entry name" value="PyrG"/>
    <property type="match status" value="1"/>
</dbReference>
<dbReference type="PANTHER" id="PTHR11550">
    <property type="entry name" value="CTP SYNTHASE"/>
    <property type="match status" value="1"/>
</dbReference>
<dbReference type="PANTHER" id="PTHR11550:SF0">
    <property type="entry name" value="CTP SYNTHASE-RELATED"/>
    <property type="match status" value="1"/>
</dbReference>
<dbReference type="Pfam" id="PF06418">
    <property type="entry name" value="CTP_synth_N"/>
    <property type="match status" value="1"/>
</dbReference>
<dbReference type="Pfam" id="PF00117">
    <property type="entry name" value="GATase"/>
    <property type="match status" value="1"/>
</dbReference>
<dbReference type="SUPFAM" id="SSF52317">
    <property type="entry name" value="Class I glutamine amidotransferase-like"/>
    <property type="match status" value="1"/>
</dbReference>
<dbReference type="SUPFAM" id="SSF52540">
    <property type="entry name" value="P-loop containing nucleoside triphosphate hydrolases"/>
    <property type="match status" value="1"/>
</dbReference>
<dbReference type="PROSITE" id="PS51273">
    <property type="entry name" value="GATASE_TYPE_1"/>
    <property type="match status" value="1"/>
</dbReference>
<protein>
    <recommendedName>
        <fullName evidence="1">CTP synthase</fullName>
        <ecNumber evidence="1">6.3.4.2</ecNumber>
    </recommendedName>
    <alternativeName>
        <fullName evidence="1">Cytidine 5'-triphosphate synthase</fullName>
    </alternativeName>
    <alternativeName>
        <fullName evidence="1">Cytidine triphosphate synthetase</fullName>
        <shortName evidence="1">CTP synthetase</shortName>
        <shortName evidence="1">CTPS</shortName>
    </alternativeName>
    <alternativeName>
        <fullName evidence="1">UTP--ammonia ligase</fullName>
    </alternativeName>
</protein>
<feature type="chain" id="PRO_1000139428" description="CTP synthase">
    <location>
        <begin position="1"/>
        <end position="555"/>
    </location>
</feature>
<feature type="domain" description="Glutamine amidotransferase type-1" evidence="1">
    <location>
        <begin position="290"/>
        <end position="541"/>
    </location>
</feature>
<feature type="region of interest" description="Amidoligase domain" evidence="1">
    <location>
        <begin position="1"/>
        <end position="265"/>
    </location>
</feature>
<feature type="active site" description="Nucleophile; for glutamine hydrolysis" evidence="1">
    <location>
        <position position="378"/>
    </location>
</feature>
<feature type="active site" evidence="1">
    <location>
        <position position="514"/>
    </location>
</feature>
<feature type="active site" evidence="1">
    <location>
        <position position="516"/>
    </location>
</feature>
<feature type="binding site" evidence="1">
    <location>
        <position position="13"/>
    </location>
    <ligand>
        <name>CTP</name>
        <dbReference type="ChEBI" id="CHEBI:37563"/>
        <note>allosteric inhibitor</note>
    </ligand>
</feature>
<feature type="binding site" evidence="1">
    <location>
        <position position="13"/>
    </location>
    <ligand>
        <name>UTP</name>
        <dbReference type="ChEBI" id="CHEBI:46398"/>
    </ligand>
</feature>
<feature type="binding site" evidence="1">
    <location>
        <begin position="14"/>
        <end position="19"/>
    </location>
    <ligand>
        <name>ATP</name>
        <dbReference type="ChEBI" id="CHEBI:30616"/>
    </ligand>
</feature>
<feature type="binding site" evidence="1">
    <location>
        <position position="71"/>
    </location>
    <ligand>
        <name>ATP</name>
        <dbReference type="ChEBI" id="CHEBI:30616"/>
    </ligand>
</feature>
<feature type="binding site" evidence="1">
    <location>
        <position position="71"/>
    </location>
    <ligand>
        <name>Mg(2+)</name>
        <dbReference type="ChEBI" id="CHEBI:18420"/>
    </ligand>
</feature>
<feature type="binding site" evidence="1">
    <location>
        <position position="139"/>
    </location>
    <ligand>
        <name>Mg(2+)</name>
        <dbReference type="ChEBI" id="CHEBI:18420"/>
    </ligand>
</feature>
<feature type="binding site" evidence="1">
    <location>
        <begin position="146"/>
        <end position="148"/>
    </location>
    <ligand>
        <name>CTP</name>
        <dbReference type="ChEBI" id="CHEBI:37563"/>
        <note>allosteric inhibitor</note>
    </ligand>
</feature>
<feature type="binding site" evidence="1">
    <location>
        <begin position="186"/>
        <end position="191"/>
    </location>
    <ligand>
        <name>CTP</name>
        <dbReference type="ChEBI" id="CHEBI:37563"/>
        <note>allosteric inhibitor</note>
    </ligand>
</feature>
<feature type="binding site" evidence="1">
    <location>
        <begin position="186"/>
        <end position="191"/>
    </location>
    <ligand>
        <name>UTP</name>
        <dbReference type="ChEBI" id="CHEBI:46398"/>
    </ligand>
</feature>
<feature type="binding site" evidence="1">
    <location>
        <position position="222"/>
    </location>
    <ligand>
        <name>CTP</name>
        <dbReference type="ChEBI" id="CHEBI:37563"/>
        <note>allosteric inhibitor</note>
    </ligand>
</feature>
<feature type="binding site" evidence="1">
    <location>
        <position position="222"/>
    </location>
    <ligand>
        <name>UTP</name>
        <dbReference type="ChEBI" id="CHEBI:46398"/>
    </ligand>
</feature>
<feature type="binding site" evidence="1">
    <location>
        <position position="351"/>
    </location>
    <ligand>
        <name>L-glutamine</name>
        <dbReference type="ChEBI" id="CHEBI:58359"/>
    </ligand>
</feature>
<feature type="binding site" evidence="1">
    <location>
        <begin position="379"/>
        <end position="382"/>
    </location>
    <ligand>
        <name>L-glutamine</name>
        <dbReference type="ChEBI" id="CHEBI:58359"/>
    </ligand>
</feature>
<feature type="binding site" evidence="1">
    <location>
        <position position="402"/>
    </location>
    <ligand>
        <name>L-glutamine</name>
        <dbReference type="ChEBI" id="CHEBI:58359"/>
    </ligand>
</feature>
<feature type="binding site" evidence="1">
    <location>
        <position position="469"/>
    </location>
    <ligand>
        <name>L-glutamine</name>
        <dbReference type="ChEBI" id="CHEBI:58359"/>
    </ligand>
</feature>
<proteinExistence type="inferred from homology"/>
<comment type="function">
    <text evidence="1">Catalyzes the ATP-dependent amination of UTP to CTP with either L-glutamine or ammonia as the source of nitrogen. Regulates intracellular CTP levels through interactions with the four ribonucleotide triphosphates.</text>
</comment>
<comment type="catalytic activity">
    <reaction evidence="1">
        <text>UTP + L-glutamine + ATP + H2O = CTP + L-glutamate + ADP + phosphate + 2 H(+)</text>
        <dbReference type="Rhea" id="RHEA:26426"/>
        <dbReference type="ChEBI" id="CHEBI:15377"/>
        <dbReference type="ChEBI" id="CHEBI:15378"/>
        <dbReference type="ChEBI" id="CHEBI:29985"/>
        <dbReference type="ChEBI" id="CHEBI:30616"/>
        <dbReference type="ChEBI" id="CHEBI:37563"/>
        <dbReference type="ChEBI" id="CHEBI:43474"/>
        <dbReference type="ChEBI" id="CHEBI:46398"/>
        <dbReference type="ChEBI" id="CHEBI:58359"/>
        <dbReference type="ChEBI" id="CHEBI:456216"/>
        <dbReference type="EC" id="6.3.4.2"/>
    </reaction>
</comment>
<comment type="catalytic activity">
    <reaction evidence="1">
        <text>L-glutamine + H2O = L-glutamate + NH4(+)</text>
        <dbReference type="Rhea" id="RHEA:15889"/>
        <dbReference type="ChEBI" id="CHEBI:15377"/>
        <dbReference type="ChEBI" id="CHEBI:28938"/>
        <dbReference type="ChEBI" id="CHEBI:29985"/>
        <dbReference type="ChEBI" id="CHEBI:58359"/>
    </reaction>
</comment>
<comment type="catalytic activity">
    <reaction evidence="1">
        <text>UTP + NH4(+) + ATP = CTP + ADP + phosphate + 2 H(+)</text>
        <dbReference type="Rhea" id="RHEA:16597"/>
        <dbReference type="ChEBI" id="CHEBI:15378"/>
        <dbReference type="ChEBI" id="CHEBI:28938"/>
        <dbReference type="ChEBI" id="CHEBI:30616"/>
        <dbReference type="ChEBI" id="CHEBI:37563"/>
        <dbReference type="ChEBI" id="CHEBI:43474"/>
        <dbReference type="ChEBI" id="CHEBI:46398"/>
        <dbReference type="ChEBI" id="CHEBI:456216"/>
    </reaction>
</comment>
<comment type="activity regulation">
    <text evidence="1">Allosterically activated by GTP, when glutamine is the substrate; GTP has no effect on the reaction when ammonia is the substrate. The allosteric effector GTP functions by stabilizing the protein conformation that binds the tetrahedral intermediate(s) formed during glutamine hydrolysis. Inhibited by the product CTP, via allosteric rather than competitive inhibition.</text>
</comment>
<comment type="pathway">
    <text evidence="1">Pyrimidine metabolism; CTP biosynthesis via de novo pathway; CTP from UDP: step 2/2.</text>
</comment>
<comment type="subunit">
    <text evidence="1">Homotetramer.</text>
</comment>
<comment type="miscellaneous">
    <text evidence="1">CTPSs have evolved a hybrid strategy for distinguishing between UTP and CTP. The overlapping regions of the product feedback inhibitory and substrate sites recognize a common feature in both compounds, the triphosphate moiety. To differentiate isosteric substrate and product pyrimidine rings, an additional pocket far from the expected kinase/ligase catalytic site, specifically recognizes the cytosine and ribose portions of the product inhibitor.</text>
</comment>
<comment type="similarity">
    <text evidence="1">Belongs to the CTP synthase family.</text>
</comment>
<organism>
    <name type="scientific">Coxiella burnetii (strain Dugway 5J108-111)</name>
    <dbReference type="NCBI Taxonomy" id="434922"/>
    <lineage>
        <taxon>Bacteria</taxon>
        <taxon>Pseudomonadati</taxon>
        <taxon>Pseudomonadota</taxon>
        <taxon>Gammaproteobacteria</taxon>
        <taxon>Legionellales</taxon>
        <taxon>Coxiellaceae</taxon>
        <taxon>Coxiella</taxon>
    </lineage>
</organism>
<accession>A9KDH0</accession>
<name>PYRG_COXBN</name>
<reference key="1">
    <citation type="journal article" date="2009" name="Infect. Immun.">
        <title>Comparative genomics reveal extensive transposon-mediated genomic plasticity and diversity among potential effector proteins within the genus Coxiella.</title>
        <authorList>
            <person name="Beare P.A."/>
            <person name="Unsworth N."/>
            <person name="Andoh M."/>
            <person name="Voth D.E."/>
            <person name="Omsland A."/>
            <person name="Gilk S.D."/>
            <person name="Williams K.P."/>
            <person name="Sobral B.W."/>
            <person name="Kupko J.J. III"/>
            <person name="Porcella S.F."/>
            <person name="Samuel J.E."/>
            <person name="Heinzen R.A."/>
        </authorList>
    </citation>
    <scope>NUCLEOTIDE SEQUENCE [LARGE SCALE GENOMIC DNA]</scope>
    <source>
        <strain>Dugway 5J108-111</strain>
    </source>
</reference>
<gene>
    <name evidence="1" type="primary">pyrG</name>
    <name type="ordered locus">CBUD_0320</name>
</gene>
<keyword id="KW-0067">ATP-binding</keyword>
<keyword id="KW-0315">Glutamine amidotransferase</keyword>
<keyword id="KW-0436">Ligase</keyword>
<keyword id="KW-0460">Magnesium</keyword>
<keyword id="KW-0479">Metal-binding</keyword>
<keyword id="KW-0547">Nucleotide-binding</keyword>
<keyword id="KW-0665">Pyrimidine biosynthesis</keyword>
<sequence>MTRYIFITGGVVSSLGKGITSASLGAILEAQGLTVTLLKLDPYINVDPGTMSPFQHGEVFVTEDGAETDLDLGHYERFVNATMTRKNNFTTGRVYADVIRKERRGDYLGGTIQVIPHITDEIKVKIREGADGADVALVEVGGTVGDIESLPFLEAIRQMRIELGDQQTLFIHLTLVPYVAVAGEIKTKPTQHSVKELRSIGIQPDILVCRSEQPLPDAERAKIALFTNVPEPSVISLSDVKSIYEIPLILRDQGLGNRVCEKLNIKATAADLDDWKKVVQAQKNPRHTVTVAVVGKYVDLEDSYKSLSEALIHAGIHTQTRVVIEYIDSEAIELHGTELLKKVDAILVPGGFGSRGIEGKILAAQYARENGIPYLGICLGMQIAIIEFARHKAQMENANSTEFDPKTPFPVVALVSEWMAKEGIIEKRKWGDDLGGTMRLGGQPCRLKIDSLARRLYGEDRVIERHRHRYEVNNDLIGELEKKGLVISGRSIDDRLVEMIELADHPWFVGCQFHPEFTSTPRKGHPLFIGFIKAGLAAKEAKKAVLAAPSQEKTD</sequence>
<evidence type="ECO:0000255" key="1">
    <source>
        <dbReference type="HAMAP-Rule" id="MF_01227"/>
    </source>
</evidence>